<gene>
    <name type="primary">PHF11</name>
    <name type="synonym">BCAP</name>
</gene>
<accession>Q9UIL8</accession>
<accession>Q5W0A4</accession>
<accession>Q5W0A6</accession>
<accession>Q9Y5A2</accession>
<protein>
    <recommendedName>
        <fullName>PHD finger protein 11</fullName>
    </recommendedName>
    <alternativeName>
        <fullName>BRCA1 C-terminus-associated protein</fullName>
    </alternativeName>
    <alternativeName>
        <fullName>Renal carcinoma antigen NY-REN-34</fullName>
    </alternativeName>
</protein>
<keyword id="KW-0010">Activator</keyword>
<keyword id="KW-0025">Alternative splicing</keyword>
<keyword id="KW-0479">Metal-binding</keyword>
<keyword id="KW-0539">Nucleus</keyword>
<keyword id="KW-1267">Proteomics identification</keyword>
<keyword id="KW-1185">Reference proteome</keyword>
<keyword id="KW-0804">Transcription</keyword>
<keyword id="KW-0805">Transcription regulation</keyword>
<keyword id="KW-0862">Zinc</keyword>
<keyword id="KW-0863">Zinc-finger</keyword>
<proteinExistence type="evidence at protein level"/>
<organism>
    <name type="scientific">Homo sapiens</name>
    <name type="common">Human</name>
    <dbReference type="NCBI Taxonomy" id="9606"/>
    <lineage>
        <taxon>Eukaryota</taxon>
        <taxon>Metazoa</taxon>
        <taxon>Chordata</taxon>
        <taxon>Craniata</taxon>
        <taxon>Vertebrata</taxon>
        <taxon>Euteleostomi</taxon>
        <taxon>Mammalia</taxon>
        <taxon>Eutheria</taxon>
        <taxon>Euarchontoglires</taxon>
        <taxon>Primates</taxon>
        <taxon>Haplorrhini</taxon>
        <taxon>Catarrhini</taxon>
        <taxon>Hominidae</taxon>
        <taxon>Homo</taxon>
    </lineage>
</organism>
<dbReference type="EMBL" id="AF155105">
    <property type="protein sequence ID" value="AAD42871.1"/>
    <property type="status" value="ALT_FRAME"/>
    <property type="molecule type" value="mRNA"/>
</dbReference>
<dbReference type="EMBL" id="AB011031">
    <property type="protein sequence ID" value="BAA32101.1"/>
    <property type="molecule type" value="mRNA"/>
</dbReference>
<dbReference type="EMBL" id="AL139321">
    <property type="status" value="NOT_ANNOTATED_CDS"/>
    <property type="molecule type" value="Genomic_DNA"/>
</dbReference>
<dbReference type="EMBL" id="CH471075">
    <property type="protein sequence ID" value="EAX08828.1"/>
    <property type="molecule type" value="Genomic_DNA"/>
</dbReference>
<dbReference type="EMBL" id="BC017212">
    <property type="protein sequence ID" value="AAH17212.2"/>
    <property type="status" value="ALT_INIT"/>
    <property type="molecule type" value="mRNA"/>
</dbReference>
<dbReference type="CCDS" id="CCDS31975.1">
    <molecule id="Q9UIL8-1"/>
</dbReference>
<dbReference type="CCDS" id="CCDS41887.1">
    <molecule id="Q9UIL8-2"/>
</dbReference>
<dbReference type="RefSeq" id="NP_001035533.1">
    <molecule id="Q9UIL8-1"/>
    <property type="nucleotide sequence ID" value="NM_001040443.3"/>
</dbReference>
<dbReference type="RefSeq" id="NP_001035534.1">
    <molecule id="Q9UIL8-2"/>
    <property type="nucleotide sequence ID" value="NM_001040444.3"/>
</dbReference>
<dbReference type="RefSeq" id="NP_001406802.1">
    <molecule id="Q9UIL8-2"/>
    <property type="nucleotide sequence ID" value="NM_001419873.1"/>
</dbReference>
<dbReference type="RefSeq" id="NP_001406803.1">
    <molecule id="Q9UIL8-2"/>
    <property type="nucleotide sequence ID" value="NM_001419874.1"/>
</dbReference>
<dbReference type="RefSeq" id="NP_001406804.1">
    <molecule id="Q9UIL8-2"/>
    <property type="nucleotide sequence ID" value="NM_001419875.1"/>
</dbReference>
<dbReference type="RefSeq" id="NP_001406805.1">
    <molecule id="Q9UIL8-2"/>
    <property type="nucleotide sequence ID" value="NM_001419876.1"/>
</dbReference>
<dbReference type="SMR" id="Q9UIL8"/>
<dbReference type="BioGRID" id="119318">
    <property type="interactions" value="142"/>
</dbReference>
<dbReference type="FunCoup" id="Q9UIL8">
    <property type="interactions" value="1048"/>
</dbReference>
<dbReference type="IntAct" id="Q9UIL8">
    <property type="interactions" value="140"/>
</dbReference>
<dbReference type="STRING" id="9606.ENSP00000367570"/>
<dbReference type="GlyGen" id="Q9UIL8">
    <property type="glycosylation" value="1 site, 1 O-linked glycan (1 site)"/>
</dbReference>
<dbReference type="iPTMnet" id="Q9UIL8"/>
<dbReference type="PhosphoSitePlus" id="Q9UIL8"/>
<dbReference type="BioMuta" id="PHF11"/>
<dbReference type="DMDM" id="259016330"/>
<dbReference type="jPOST" id="Q9UIL8"/>
<dbReference type="MassIVE" id="Q9UIL8"/>
<dbReference type="PaxDb" id="9606-ENSP00000367570"/>
<dbReference type="PeptideAtlas" id="Q9UIL8"/>
<dbReference type="ProteomicsDB" id="84548">
    <molecule id="Q9UIL8-1"/>
</dbReference>
<dbReference type="ProteomicsDB" id="84549">
    <molecule id="Q9UIL8-2"/>
</dbReference>
<dbReference type="Antibodypedia" id="9539">
    <property type="antibodies" value="200 antibodies from 29 providers"/>
</dbReference>
<dbReference type="DNASU" id="51131"/>
<dbReference type="Ensembl" id="ENST00000357596.7">
    <molecule id="Q9UIL8-2"/>
    <property type="protein sequence ID" value="ENSP00000350209.3"/>
    <property type="gene ID" value="ENSG00000136147.18"/>
</dbReference>
<dbReference type="Ensembl" id="ENST00000378319.8">
    <molecule id="Q9UIL8-1"/>
    <property type="protein sequence ID" value="ENSP00000367570.3"/>
    <property type="gene ID" value="ENSG00000136147.18"/>
</dbReference>
<dbReference type="Ensembl" id="ENST00000488958.5">
    <molecule id="Q9UIL8-2"/>
    <property type="protein sequence ID" value="ENSP00000417539.1"/>
    <property type="gene ID" value="ENSG00000136147.18"/>
</dbReference>
<dbReference type="GeneID" id="51131"/>
<dbReference type="KEGG" id="hsa:51131"/>
<dbReference type="MANE-Select" id="ENST00000378319.8">
    <property type="protein sequence ID" value="ENSP00000367570.3"/>
    <property type="RefSeq nucleotide sequence ID" value="NM_001040443.3"/>
    <property type="RefSeq protein sequence ID" value="NP_001035533.1"/>
</dbReference>
<dbReference type="UCSC" id="uc001vdb.4">
    <molecule id="Q9UIL8-1"/>
    <property type="organism name" value="human"/>
</dbReference>
<dbReference type="AGR" id="HGNC:17024"/>
<dbReference type="CTD" id="51131"/>
<dbReference type="DisGeNET" id="51131"/>
<dbReference type="GeneCards" id="PHF11"/>
<dbReference type="HGNC" id="HGNC:17024">
    <property type="gene designation" value="PHF11"/>
</dbReference>
<dbReference type="HPA" id="ENSG00000136147">
    <property type="expression patterns" value="Low tissue specificity"/>
</dbReference>
<dbReference type="MalaCards" id="PHF11"/>
<dbReference type="MIM" id="607796">
    <property type="type" value="gene"/>
</dbReference>
<dbReference type="neXtProt" id="NX_Q9UIL8"/>
<dbReference type="OpenTargets" id="ENSG00000136147"/>
<dbReference type="PharmGKB" id="PA134947696"/>
<dbReference type="VEuPathDB" id="HostDB:ENSG00000136147"/>
<dbReference type="eggNOG" id="KOG1084">
    <property type="taxonomic scope" value="Eukaryota"/>
</dbReference>
<dbReference type="GeneTree" id="ENSGT00950000182865"/>
<dbReference type="HOGENOM" id="CLU_076108_0_0_1"/>
<dbReference type="InParanoid" id="Q9UIL8"/>
<dbReference type="OMA" id="ECEDHDS"/>
<dbReference type="OrthoDB" id="2384350at2759"/>
<dbReference type="PAN-GO" id="Q9UIL8">
    <property type="GO annotations" value="1 GO annotation based on evolutionary models"/>
</dbReference>
<dbReference type="PhylomeDB" id="Q9UIL8"/>
<dbReference type="TreeFam" id="TF325426"/>
<dbReference type="PathwayCommons" id="Q9UIL8"/>
<dbReference type="SignaLink" id="Q9UIL8"/>
<dbReference type="BioGRID-ORCS" id="51131">
    <property type="hits" value="10 hits in 1160 CRISPR screens"/>
</dbReference>
<dbReference type="GenomeRNAi" id="51131"/>
<dbReference type="Pharos" id="Q9UIL8">
    <property type="development level" value="Tbio"/>
</dbReference>
<dbReference type="PRO" id="PR:Q9UIL8"/>
<dbReference type="Proteomes" id="UP000005640">
    <property type="component" value="Chromosome 13"/>
</dbReference>
<dbReference type="RNAct" id="Q9UIL8">
    <property type="molecule type" value="protein"/>
</dbReference>
<dbReference type="Bgee" id="ENSG00000136147">
    <property type="expression patterns" value="Expressed in left lobe of thyroid gland and 195 other cell types or tissues"/>
</dbReference>
<dbReference type="ExpressionAtlas" id="Q9UIL8">
    <property type="expression patterns" value="baseline and differential"/>
</dbReference>
<dbReference type="GO" id="GO:0031965">
    <property type="term" value="C:nuclear membrane"/>
    <property type="evidence" value="ECO:0000314"/>
    <property type="project" value="HPA"/>
</dbReference>
<dbReference type="GO" id="GO:0005654">
    <property type="term" value="C:nucleoplasm"/>
    <property type="evidence" value="ECO:0000314"/>
    <property type="project" value="HPA"/>
</dbReference>
<dbReference type="GO" id="GO:0005634">
    <property type="term" value="C:nucleus"/>
    <property type="evidence" value="ECO:0000318"/>
    <property type="project" value="GO_Central"/>
</dbReference>
<dbReference type="GO" id="GO:0008270">
    <property type="term" value="F:zinc ion binding"/>
    <property type="evidence" value="ECO:0007669"/>
    <property type="project" value="UniProtKB-KW"/>
</dbReference>
<dbReference type="CDD" id="cd15712">
    <property type="entry name" value="ePHD_PHF11"/>
    <property type="match status" value="1"/>
</dbReference>
<dbReference type="FunFam" id="3.30.40.10:FF:000425">
    <property type="entry name" value="PHD finger protein 11"/>
    <property type="match status" value="1"/>
</dbReference>
<dbReference type="Gene3D" id="3.30.40.10">
    <property type="entry name" value="Zinc/RING finger domain, C3HC4 (zinc finger)"/>
    <property type="match status" value="1"/>
</dbReference>
<dbReference type="InterPro" id="IPR034732">
    <property type="entry name" value="EPHD"/>
</dbReference>
<dbReference type="InterPro" id="IPR051188">
    <property type="entry name" value="PHD-type_Zinc_Finger"/>
</dbReference>
<dbReference type="InterPro" id="IPR011011">
    <property type="entry name" value="Znf_FYVE_PHD"/>
</dbReference>
<dbReference type="InterPro" id="IPR001965">
    <property type="entry name" value="Znf_PHD"/>
</dbReference>
<dbReference type="InterPro" id="IPR013083">
    <property type="entry name" value="Znf_RING/FYVE/PHD"/>
</dbReference>
<dbReference type="PANTHER" id="PTHR12420">
    <property type="entry name" value="PHD FINGER PROTEIN"/>
    <property type="match status" value="1"/>
</dbReference>
<dbReference type="PANTHER" id="PTHR12420:SF4">
    <property type="entry name" value="PHD FINGER PROTEIN 11"/>
    <property type="match status" value="1"/>
</dbReference>
<dbReference type="Pfam" id="PF13771">
    <property type="entry name" value="zf-HC5HC2H"/>
    <property type="match status" value="1"/>
</dbReference>
<dbReference type="SMART" id="SM00249">
    <property type="entry name" value="PHD"/>
    <property type="match status" value="1"/>
</dbReference>
<dbReference type="SUPFAM" id="SSF57903">
    <property type="entry name" value="FYVE/PHD zinc finger"/>
    <property type="match status" value="1"/>
</dbReference>
<dbReference type="PROSITE" id="PS51805">
    <property type="entry name" value="EPHD"/>
    <property type="match status" value="1"/>
</dbReference>
<comment type="function">
    <text evidence="3">Positive regulator of Th1-type cytokine gene expression.</text>
</comment>
<comment type="subunit">
    <text evidence="3">Interacts with BRCA1 and RELA.</text>
</comment>
<comment type="interaction">
    <interactant intactId="EBI-2861403">
        <id>Q9UIL8</id>
    </interactant>
    <interactant intactId="EBI-591778">
        <id>P61970</id>
        <label>NUTF2</label>
    </interactant>
    <organismsDiffer>false</organismsDiffer>
    <experiments>3</experiments>
</comment>
<comment type="interaction">
    <interactant intactId="EBI-2861403">
        <id>Q9UIL8</id>
    </interactant>
    <interactant intactId="EBI-727004">
        <id>O00560</id>
        <label>SDCBP</label>
    </interactant>
    <organismsDiffer>false</organismsDiffer>
    <experiments>3</experiments>
</comment>
<comment type="interaction">
    <interactant intactId="EBI-2861403">
        <id>Q9UIL8</id>
    </interactant>
    <interactant intactId="EBI-11995806">
        <id>Q9H0A9-2</id>
        <label>SPATC1L</label>
    </interactant>
    <organismsDiffer>false</organismsDiffer>
    <experiments>3</experiments>
</comment>
<comment type="interaction">
    <interactant intactId="EBI-2861403">
        <id>Q9UIL8</id>
    </interactant>
    <interactant intactId="EBI-750487">
        <id>Q8WW24</id>
        <label>TEKT4</label>
    </interactant>
    <organismsDiffer>false</organismsDiffer>
    <experiments>3</experiments>
</comment>
<comment type="interaction">
    <interactant intactId="EBI-2861403">
        <id>Q9UIL8</id>
    </interactant>
    <interactant intactId="EBI-725997">
        <id>Q8WV44</id>
        <label>TRIM41</label>
    </interactant>
    <organismsDiffer>false</organismsDiffer>
    <experiments>3</experiments>
</comment>
<comment type="subcellular location">
    <subcellularLocation>
        <location evidence="3">Nucleus</location>
    </subcellularLocation>
</comment>
<comment type="alternative products">
    <event type="alternative splicing"/>
    <isoform>
        <id>Q9UIL8-1</id>
        <name>1</name>
        <sequence type="displayed"/>
    </isoform>
    <isoform>
        <id>Q9UIL8-2</id>
        <name>2</name>
        <sequence type="described" ref="VSP_038088"/>
    </isoform>
    <text>A number of isoforms may be produced.</text>
</comment>
<comment type="tissue specificity">
    <text evidence="3">Highly expressed in T and B-cells, as well as natural killer and mature dendritic cells. Expressed at higher levels in Th1 as compared to Th2 cells. Expressed at low levels in all normal tissues tested, including lung, testis, small intestine, breast, liver and placenta.</text>
</comment>
<comment type="polymorphism">
    <text evidence="2 3">Variation in PHF11 seems to be associated with propensity to childhood atopic dermatitis and asthma.</text>
</comment>
<comment type="sequence caution" evidence="5">
    <conflict type="frameshift">
        <sequence resource="EMBL-CDS" id="AAD42871"/>
    </conflict>
</comment>
<comment type="sequence caution" evidence="5">
    <conflict type="erroneous initiation">
        <sequence resource="EMBL-CDS" id="AAH17212"/>
    </conflict>
</comment>
<sequence>MAQASPPRPERVLGASSPEARPAQEALLLPTGVFQVAEKMEKRTCALCPKDVEYNVLYFAQSENIAAHENCLLYSSGLVECEDQDPLNPDRSFDVESVKKEIQRGRKLKCKFCHKRGATVGCDLKNCNKNYHFFCAKKDDAVPQSDGVRGIYKLLCQQHAQFPIIAQSAKFSGVKRKRGRKKPLSGNHVQPPETMKCNTFIRQVKEEHGRHTDATVKVPFLKKCKEAGLLNYLLEEILDKVHSIPEKLMDETTSESDYEEIGSALFDCRLFEDTFVNFQAAIEKKIHASQQRWQQLKEEIELLQDLKQTLCSFQENRDLMSSSTSISSLSY</sequence>
<reference key="1">
    <citation type="journal article" date="1999" name="Int. J. Cancer">
        <title>Antigens recognized by autologous antibody in patients with renal-cell carcinoma.</title>
        <authorList>
            <person name="Scanlan M.J."/>
            <person name="Gordan J.D."/>
            <person name="Williamson B."/>
            <person name="Stockert E."/>
            <person name="Bander N.H."/>
            <person name="Jongeneel C.V."/>
            <person name="Gure A.O."/>
            <person name="Jaeger D."/>
            <person name="Jaeger E."/>
            <person name="Knuth A."/>
            <person name="Chen Y.-T."/>
            <person name="Old L.J."/>
        </authorList>
    </citation>
    <scope>NUCLEOTIDE SEQUENCE [MRNA] (ISOFORM 2)</scope>
    <scope>IDENTIFICATION AS A RENAL CANCER ANTIGEN</scope>
    <source>
        <tissue>Renal cell carcinoma</tissue>
    </source>
</reference>
<reference key="2">
    <citation type="submission" date="1998-02" db="EMBL/GenBank/DDBJ databases">
        <title>A BRCA1 C-terminus-associated protein BCAP is encoded at B-CLL deleted region in 13q14.</title>
        <authorList>
            <person name="Kato H."/>
            <person name="Seki N."/>
            <person name="Seto M."/>
            <person name="Ishida M."/>
        </authorList>
    </citation>
    <scope>NUCLEOTIDE SEQUENCE [MRNA] (ISOFORM 1)</scope>
</reference>
<reference key="3">
    <citation type="journal article" date="2004" name="Nature">
        <title>The DNA sequence and analysis of human chromosome 13.</title>
        <authorList>
            <person name="Dunham A."/>
            <person name="Matthews L.H."/>
            <person name="Burton J."/>
            <person name="Ashurst J.L."/>
            <person name="Howe K.L."/>
            <person name="Ashcroft K.J."/>
            <person name="Beare D.M."/>
            <person name="Burford D.C."/>
            <person name="Hunt S.E."/>
            <person name="Griffiths-Jones S."/>
            <person name="Jones M.C."/>
            <person name="Keenan S.J."/>
            <person name="Oliver K."/>
            <person name="Scott C.E."/>
            <person name="Ainscough R."/>
            <person name="Almeida J.P."/>
            <person name="Ambrose K.D."/>
            <person name="Andrews D.T."/>
            <person name="Ashwell R.I.S."/>
            <person name="Babbage A.K."/>
            <person name="Bagguley C.L."/>
            <person name="Bailey J."/>
            <person name="Bannerjee R."/>
            <person name="Barlow K.F."/>
            <person name="Bates K."/>
            <person name="Beasley H."/>
            <person name="Bird C.P."/>
            <person name="Bray-Allen S."/>
            <person name="Brown A.J."/>
            <person name="Brown J.Y."/>
            <person name="Burrill W."/>
            <person name="Carder C."/>
            <person name="Carter N.P."/>
            <person name="Chapman J.C."/>
            <person name="Clamp M.E."/>
            <person name="Clark S.Y."/>
            <person name="Clarke G."/>
            <person name="Clee C.M."/>
            <person name="Clegg S.C."/>
            <person name="Cobley V."/>
            <person name="Collins J.E."/>
            <person name="Corby N."/>
            <person name="Coville G.J."/>
            <person name="Deloukas P."/>
            <person name="Dhami P."/>
            <person name="Dunham I."/>
            <person name="Dunn M."/>
            <person name="Earthrowl M.E."/>
            <person name="Ellington A.G."/>
            <person name="Faulkner L."/>
            <person name="Frankish A.G."/>
            <person name="Frankland J."/>
            <person name="French L."/>
            <person name="Garner P."/>
            <person name="Garnett J."/>
            <person name="Gilbert J.G.R."/>
            <person name="Gilson C.J."/>
            <person name="Ghori J."/>
            <person name="Grafham D.V."/>
            <person name="Gribble S.M."/>
            <person name="Griffiths C."/>
            <person name="Hall R.E."/>
            <person name="Hammond S."/>
            <person name="Harley J.L."/>
            <person name="Hart E.A."/>
            <person name="Heath P.D."/>
            <person name="Howden P.J."/>
            <person name="Huckle E.J."/>
            <person name="Hunt P.J."/>
            <person name="Hunt A.R."/>
            <person name="Johnson C."/>
            <person name="Johnson D."/>
            <person name="Kay M."/>
            <person name="Kimberley A.M."/>
            <person name="King A."/>
            <person name="Laird G.K."/>
            <person name="Langford C.J."/>
            <person name="Lawlor S."/>
            <person name="Leongamornlert D.A."/>
            <person name="Lloyd D.M."/>
            <person name="Lloyd C."/>
            <person name="Loveland J.E."/>
            <person name="Lovell J."/>
            <person name="Martin S."/>
            <person name="Mashreghi-Mohammadi M."/>
            <person name="McLaren S.J."/>
            <person name="McMurray A."/>
            <person name="Milne S."/>
            <person name="Moore M.J.F."/>
            <person name="Nickerson T."/>
            <person name="Palmer S.A."/>
            <person name="Pearce A.V."/>
            <person name="Peck A.I."/>
            <person name="Pelan S."/>
            <person name="Phillimore B."/>
            <person name="Porter K.M."/>
            <person name="Rice C.M."/>
            <person name="Searle S."/>
            <person name="Sehra H.K."/>
            <person name="Shownkeen R."/>
            <person name="Skuce C.D."/>
            <person name="Smith M."/>
            <person name="Steward C.A."/>
            <person name="Sycamore N."/>
            <person name="Tester J."/>
            <person name="Thomas D.W."/>
            <person name="Tracey A."/>
            <person name="Tromans A."/>
            <person name="Tubby B."/>
            <person name="Wall M."/>
            <person name="Wallis J.M."/>
            <person name="West A.P."/>
            <person name="Whitehead S.L."/>
            <person name="Willey D.L."/>
            <person name="Wilming L."/>
            <person name="Wray P.W."/>
            <person name="Wright M.W."/>
            <person name="Young L."/>
            <person name="Coulson A."/>
            <person name="Durbin R.M."/>
            <person name="Hubbard T."/>
            <person name="Sulston J.E."/>
            <person name="Beck S."/>
            <person name="Bentley D.R."/>
            <person name="Rogers J."/>
            <person name="Ross M.T."/>
        </authorList>
    </citation>
    <scope>NUCLEOTIDE SEQUENCE [LARGE SCALE GENOMIC DNA]</scope>
</reference>
<reference key="4">
    <citation type="submission" date="2005-07" db="EMBL/GenBank/DDBJ databases">
        <authorList>
            <person name="Mural R.J."/>
            <person name="Istrail S."/>
            <person name="Sutton G.G."/>
            <person name="Florea L."/>
            <person name="Halpern A.L."/>
            <person name="Mobarry C.M."/>
            <person name="Lippert R."/>
            <person name="Walenz B."/>
            <person name="Shatkay H."/>
            <person name="Dew I."/>
            <person name="Miller J.R."/>
            <person name="Flanigan M.J."/>
            <person name="Edwards N.J."/>
            <person name="Bolanos R."/>
            <person name="Fasulo D."/>
            <person name="Halldorsson B.V."/>
            <person name="Hannenhalli S."/>
            <person name="Turner R."/>
            <person name="Yooseph S."/>
            <person name="Lu F."/>
            <person name="Nusskern D.R."/>
            <person name="Shue B.C."/>
            <person name="Zheng X.H."/>
            <person name="Zhong F."/>
            <person name="Delcher A.L."/>
            <person name="Huson D.H."/>
            <person name="Kravitz S.A."/>
            <person name="Mouchard L."/>
            <person name="Reinert K."/>
            <person name="Remington K.A."/>
            <person name="Clark A.G."/>
            <person name="Waterman M.S."/>
            <person name="Eichler E.E."/>
            <person name="Adams M.D."/>
            <person name="Hunkapiller M.W."/>
            <person name="Myers E.W."/>
            <person name="Venter J.C."/>
        </authorList>
    </citation>
    <scope>NUCLEOTIDE SEQUENCE [LARGE SCALE GENOMIC DNA]</scope>
</reference>
<reference key="5">
    <citation type="journal article" date="2004" name="Genome Res.">
        <title>The status, quality, and expansion of the NIH full-length cDNA project: the Mammalian Gene Collection (MGC).</title>
        <authorList>
            <consortium name="The MGC Project Team"/>
        </authorList>
    </citation>
    <scope>NUCLEOTIDE SEQUENCE [LARGE SCALE MRNA] (ISOFORM 1)</scope>
    <source>
        <tissue>B-cell</tissue>
    </source>
</reference>
<reference key="6">
    <citation type="journal article" date="2003" name="Nat. Genet.">
        <title>Positional cloning of a quantitative trait locus on chromosome 13q14 that influences immunoglobulin E levels and asthma.</title>
        <authorList>
            <person name="Zhang Y."/>
            <person name="Leaves N.I."/>
            <person name="Anderson G.G."/>
            <person name="Ponting C.P."/>
            <person name="Broxholme J."/>
            <person name="Holt R."/>
            <person name="Edser P."/>
            <person name="Bhattacharyya S."/>
            <person name="Dunham A."/>
            <person name="Adcock I.M."/>
            <person name="Pulleyn L."/>
            <person name="Barnes P.J."/>
            <person name="Harper J.I."/>
            <person name="Abecasis G."/>
            <person name="Cardon L."/>
            <person name="White M."/>
            <person name="Burton J."/>
            <person name="Matthews L."/>
            <person name="Mott R."/>
            <person name="Ross M."/>
            <person name="Cox R."/>
            <person name="Moffatt M.F."/>
            <person name="Cookson W.O.C.M."/>
        </authorList>
    </citation>
    <scope>ALTERNATIVE SPLICING</scope>
    <scope>ASSOCIATION WITH ASTHMA</scope>
</reference>
<reference key="7">
    <citation type="journal article" date="2005" name="Genes Immun.">
        <title>Polymorphisms within the PHF11 gene at chromosome 13q14 are associated with childhood atopic dermatitis.</title>
        <authorList>
            <person name="Jang N."/>
            <person name="Stewart G."/>
            <person name="Jones G."/>
        </authorList>
    </citation>
    <scope>ASSOCIATION WITH ATOPIC DERMATITIS</scope>
</reference>
<reference key="8">
    <citation type="journal article" date="2008" name="J. Allergy Clin. Immunol.">
        <title>Functional characterization of the atopy-associated gene PHF11.</title>
        <authorList>
            <person name="Clarke E."/>
            <person name="Rahman N."/>
            <person name="Page N."/>
            <person name="Rolph M.S."/>
            <person name="Stewart G.J."/>
            <person name="Jones G.J."/>
        </authorList>
    </citation>
    <scope>FUNCTION</scope>
    <scope>SUBCELLULAR LOCATION</scope>
    <scope>ALTERNATIVE SPLICING</scope>
    <scope>TISSUE SPECIFICITY</scope>
    <scope>INTERACTION WITH RELA</scope>
    <scope>ASSOCIATION WITH ASTHMA</scope>
</reference>
<feature type="chain" id="PRO_0000059301" description="PHD finger protein 11">
    <location>
        <begin position="1"/>
        <end position="331"/>
    </location>
</feature>
<feature type="zinc finger region" description="C2HC pre-PHD-type" evidence="1">
    <location>
        <begin position="42"/>
        <end position="78"/>
    </location>
</feature>
<feature type="zinc finger region" description="PHD-type" evidence="1">
    <location>
        <begin position="108"/>
        <end position="160"/>
    </location>
</feature>
<feature type="splice variant" id="VSP_038088" description="In isoform 2." evidence="4">
    <location>
        <begin position="1"/>
        <end position="39"/>
    </location>
</feature>
<name>PHF11_HUMAN</name>
<evidence type="ECO:0000255" key="1">
    <source>
        <dbReference type="PROSITE-ProRule" id="PRU01146"/>
    </source>
</evidence>
<evidence type="ECO:0000269" key="2">
    <source>
    </source>
</evidence>
<evidence type="ECO:0000269" key="3">
    <source>
    </source>
</evidence>
<evidence type="ECO:0000303" key="4">
    <source>
    </source>
</evidence>
<evidence type="ECO:0000305" key="5"/>